<feature type="chain" id="PRO_1000077408" description="Glycerol kinase">
    <location>
        <begin position="1"/>
        <end position="500"/>
    </location>
</feature>
<feature type="binding site" evidence="1">
    <location>
        <position position="16"/>
    </location>
    <ligand>
        <name>ADP</name>
        <dbReference type="ChEBI" id="CHEBI:456216"/>
    </ligand>
</feature>
<feature type="binding site" evidence="1">
    <location>
        <position position="16"/>
    </location>
    <ligand>
        <name>ATP</name>
        <dbReference type="ChEBI" id="CHEBI:30616"/>
    </ligand>
</feature>
<feature type="binding site" evidence="1">
    <location>
        <position position="16"/>
    </location>
    <ligand>
        <name>sn-glycerol 3-phosphate</name>
        <dbReference type="ChEBI" id="CHEBI:57597"/>
    </ligand>
</feature>
<feature type="binding site" evidence="1">
    <location>
        <position position="17"/>
    </location>
    <ligand>
        <name>ATP</name>
        <dbReference type="ChEBI" id="CHEBI:30616"/>
    </ligand>
</feature>
<feature type="binding site" evidence="1">
    <location>
        <position position="20"/>
    </location>
    <ligand>
        <name>ADP</name>
        <dbReference type="ChEBI" id="CHEBI:456216"/>
    </ligand>
</feature>
<feature type="binding site" evidence="1">
    <location>
        <position position="86"/>
    </location>
    <ligand>
        <name>glycerol</name>
        <dbReference type="ChEBI" id="CHEBI:17754"/>
    </ligand>
</feature>
<feature type="binding site" evidence="1">
    <location>
        <position position="86"/>
    </location>
    <ligand>
        <name>sn-glycerol 3-phosphate</name>
        <dbReference type="ChEBI" id="CHEBI:57597"/>
    </ligand>
</feature>
<feature type="binding site" evidence="1">
    <location>
        <position position="87"/>
    </location>
    <ligand>
        <name>glycerol</name>
        <dbReference type="ChEBI" id="CHEBI:17754"/>
    </ligand>
</feature>
<feature type="binding site" evidence="1">
    <location>
        <position position="87"/>
    </location>
    <ligand>
        <name>sn-glycerol 3-phosphate</name>
        <dbReference type="ChEBI" id="CHEBI:57597"/>
    </ligand>
</feature>
<feature type="binding site" evidence="1">
    <location>
        <position position="138"/>
    </location>
    <ligand>
        <name>glycerol</name>
        <dbReference type="ChEBI" id="CHEBI:17754"/>
    </ligand>
</feature>
<feature type="binding site" evidence="1">
    <location>
        <position position="138"/>
    </location>
    <ligand>
        <name>sn-glycerol 3-phosphate</name>
        <dbReference type="ChEBI" id="CHEBI:57597"/>
    </ligand>
</feature>
<feature type="binding site" evidence="1">
    <location>
        <position position="243"/>
    </location>
    <ligand>
        <name>glycerol</name>
        <dbReference type="ChEBI" id="CHEBI:17754"/>
    </ligand>
</feature>
<feature type="binding site" evidence="1">
    <location>
        <position position="243"/>
    </location>
    <ligand>
        <name>sn-glycerol 3-phosphate</name>
        <dbReference type="ChEBI" id="CHEBI:57597"/>
    </ligand>
</feature>
<feature type="binding site" evidence="1">
    <location>
        <position position="244"/>
    </location>
    <ligand>
        <name>glycerol</name>
        <dbReference type="ChEBI" id="CHEBI:17754"/>
    </ligand>
</feature>
<feature type="binding site" evidence="1">
    <location>
        <position position="265"/>
    </location>
    <ligand>
        <name>ADP</name>
        <dbReference type="ChEBI" id="CHEBI:456216"/>
    </ligand>
</feature>
<feature type="binding site" evidence="1">
    <location>
        <position position="265"/>
    </location>
    <ligand>
        <name>ATP</name>
        <dbReference type="ChEBI" id="CHEBI:30616"/>
    </ligand>
</feature>
<feature type="binding site" evidence="1">
    <location>
        <position position="313"/>
    </location>
    <ligand>
        <name>ADP</name>
        <dbReference type="ChEBI" id="CHEBI:456216"/>
    </ligand>
</feature>
<feature type="binding site" evidence="1">
    <location>
        <position position="313"/>
    </location>
    <ligand>
        <name>ATP</name>
        <dbReference type="ChEBI" id="CHEBI:30616"/>
    </ligand>
</feature>
<feature type="binding site" evidence="1">
    <location>
        <position position="317"/>
    </location>
    <ligand>
        <name>ATP</name>
        <dbReference type="ChEBI" id="CHEBI:30616"/>
    </ligand>
</feature>
<feature type="binding site" evidence="1">
    <location>
        <position position="414"/>
    </location>
    <ligand>
        <name>ADP</name>
        <dbReference type="ChEBI" id="CHEBI:456216"/>
    </ligand>
</feature>
<feature type="binding site" evidence="1">
    <location>
        <position position="414"/>
    </location>
    <ligand>
        <name>ATP</name>
        <dbReference type="ChEBI" id="CHEBI:30616"/>
    </ligand>
</feature>
<feature type="binding site" evidence="1">
    <location>
        <position position="418"/>
    </location>
    <ligand>
        <name>ADP</name>
        <dbReference type="ChEBI" id="CHEBI:456216"/>
    </ligand>
</feature>
<protein>
    <recommendedName>
        <fullName evidence="1">Glycerol kinase</fullName>
        <ecNumber evidence="1">2.7.1.30</ecNumber>
    </recommendedName>
    <alternativeName>
        <fullName evidence="1">ATP:glycerol 3-phosphotransferase</fullName>
    </alternativeName>
    <alternativeName>
        <fullName evidence="1">Glycerokinase</fullName>
        <shortName evidence="1">GK</shortName>
    </alternativeName>
</protein>
<organism>
    <name type="scientific">Trichormus variabilis (strain ATCC 29413 / PCC 7937)</name>
    <name type="common">Anabaena variabilis</name>
    <dbReference type="NCBI Taxonomy" id="240292"/>
    <lineage>
        <taxon>Bacteria</taxon>
        <taxon>Bacillati</taxon>
        <taxon>Cyanobacteriota</taxon>
        <taxon>Cyanophyceae</taxon>
        <taxon>Nostocales</taxon>
        <taxon>Nostocaceae</taxon>
        <taxon>Trichormus</taxon>
    </lineage>
</organism>
<evidence type="ECO:0000255" key="1">
    <source>
        <dbReference type="HAMAP-Rule" id="MF_00186"/>
    </source>
</evidence>
<reference key="1">
    <citation type="journal article" date="2014" name="Stand. Genomic Sci.">
        <title>Complete genome sequence of Anabaena variabilis ATCC 29413.</title>
        <authorList>
            <person name="Thiel T."/>
            <person name="Pratte B.S."/>
            <person name="Zhong J."/>
            <person name="Goodwin L."/>
            <person name="Copeland A."/>
            <person name="Lucas S."/>
            <person name="Han C."/>
            <person name="Pitluck S."/>
            <person name="Land M.L."/>
            <person name="Kyrpides N.C."/>
            <person name="Woyke T."/>
        </authorList>
    </citation>
    <scope>NUCLEOTIDE SEQUENCE [LARGE SCALE GENOMIC DNA]</scope>
    <source>
        <strain>ATCC 29413 / PCC 7937</strain>
    </source>
</reference>
<comment type="function">
    <text evidence="1">Key enzyme in the regulation of glycerol uptake and metabolism. Catalyzes the phosphorylation of glycerol to yield sn-glycerol 3-phosphate.</text>
</comment>
<comment type="catalytic activity">
    <reaction evidence="1">
        <text>glycerol + ATP = sn-glycerol 3-phosphate + ADP + H(+)</text>
        <dbReference type="Rhea" id="RHEA:21644"/>
        <dbReference type="ChEBI" id="CHEBI:15378"/>
        <dbReference type="ChEBI" id="CHEBI:17754"/>
        <dbReference type="ChEBI" id="CHEBI:30616"/>
        <dbReference type="ChEBI" id="CHEBI:57597"/>
        <dbReference type="ChEBI" id="CHEBI:456216"/>
        <dbReference type="EC" id="2.7.1.30"/>
    </reaction>
</comment>
<comment type="activity regulation">
    <text evidence="1">Inhibited by fructose 1,6-bisphosphate (FBP).</text>
</comment>
<comment type="pathway">
    <text evidence="1">Polyol metabolism; glycerol degradation via glycerol kinase pathway; sn-glycerol 3-phosphate from glycerol: step 1/1.</text>
</comment>
<comment type="similarity">
    <text evidence="1">Belongs to the FGGY kinase family.</text>
</comment>
<accession>Q3M3M2</accession>
<gene>
    <name evidence="1" type="primary">glpK</name>
    <name type="ordered locus">Ava_4817</name>
</gene>
<keyword id="KW-0067">ATP-binding</keyword>
<keyword id="KW-0319">Glycerol metabolism</keyword>
<keyword id="KW-0418">Kinase</keyword>
<keyword id="KW-0547">Nucleotide-binding</keyword>
<keyword id="KW-0808">Transferase</keyword>
<proteinExistence type="inferred from homology"/>
<name>GLPK_TRIV2</name>
<sequence length="500" mass="55073">MQTSSSGYILALDLGTTGNRAFIFNNAGKIVAQAYKELTQHYPQPGWLEHDAEEIWQDTCWVMKTAIANAQISPSEIAAIGLTVQRETCLLWDKTTGKPLHKAIVWQDRRTAPLCHQLQEKGYAQEIYSRTGLVVDAYFSATKLRWLLDYITGVDLKNVLAGTIDTWILWKLTGGKVHATDHSNASRTMLMNLKTGEWDEQLLEILQIPAHILPQIQPSLGKFGLTDTSLLDTAIPITAILGDQQAALFGHGCDRPGLMKCTYGTGSFLVAHTGSNIVRSQHQLISTIAWTQYNSQENINIGYALEGSMFTSGACIQWLRDGIKLIKTAAETETMANQVDDNGGVYFVPAFSGLGAPYWDMNARGAFFGITASVQPQHLVRAVLEAIAYQVLEVVQAINASCSSPMQRLIVDGGACENNFLMQFQADVLGIPVERPTMRDTTVQGAAFAAGLAVGFWDSYTALVNQRQIDRIFEPGEGSQNAIYNFATWQKAVKRSLDWV</sequence>
<dbReference type="EC" id="2.7.1.30" evidence="1"/>
<dbReference type="EMBL" id="CP000117">
    <property type="protein sequence ID" value="ABA24414.1"/>
    <property type="molecule type" value="Genomic_DNA"/>
</dbReference>
<dbReference type="SMR" id="Q3M3M2"/>
<dbReference type="STRING" id="240292.Ava_4817"/>
<dbReference type="KEGG" id="ava:Ava_4817"/>
<dbReference type="eggNOG" id="COG0554">
    <property type="taxonomic scope" value="Bacteria"/>
</dbReference>
<dbReference type="HOGENOM" id="CLU_009281_2_3_3"/>
<dbReference type="UniPathway" id="UPA00618">
    <property type="reaction ID" value="UER00672"/>
</dbReference>
<dbReference type="Proteomes" id="UP000002533">
    <property type="component" value="Chromosome"/>
</dbReference>
<dbReference type="GO" id="GO:0005829">
    <property type="term" value="C:cytosol"/>
    <property type="evidence" value="ECO:0007669"/>
    <property type="project" value="TreeGrafter"/>
</dbReference>
<dbReference type="GO" id="GO:0005524">
    <property type="term" value="F:ATP binding"/>
    <property type="evidence" value="ECO:0007669"/>
    <property type="project" value="UniProtKB-UniRule"/>
</dbReference>
<dbReference type="GO" id="GO:0004370">
    <property type="term" value="F:glycerol kinase activity"/>
    <property type="evidence" value="ECO:0000250"/>
    <property type="project" value="UniProtKB"/>
</dbReference>
<dbReference type="GO" id="GO:0019563">
    <property type="term" value="P:glycerol catabolic process"/>
    <property type="evidence" value="ECO:0007669"/>
    <property type="project" value="UniProtKB-UniRule"/>
</dbReference>
<dbReference type="GO" id="GO:0006071">
    <property type="term" value="P:glycerol metabolic process"/>
    <property type="evidence" value="ECO:0000250"/>
    <property type="project" value="UniProtKB"/>
</dbReference>
<dbReference type="GO" id="GO:0006072">
    <property type="term" value="P:glycerol-3-phosphate metabolic process"/>
    <property type="evidence" value="ECO:0007669"/>
    <property type="project" value="InterPro"/>
</dbReference>
<dbReference type="CDD" id="cd07786">
    <property type="entry name" value="FGGY_EcGK_like"/>
    <property type="match status" value="1"/>
</dbReference>
<dbReference type="FunFam" id="3.30.420.40:FF:000007">
    <property type="entry name" value="Glycerol kinase"/>
    <property type="match status" value="1"/>
</dbReference>
<dbReference type="FunFam" id="3.30.420.40:FF:000008">
    <property type="entry name" value="Glycerol kinase"/>
    <property type="match status" value="1"/>
</dbReference>
<dbReference type="Gene3D" id="3.30.420.40">
    <property type="match status" value="2"/>
</dbReference>
<dbReference type="HAMAP" id="MF_00186">
    <property type="entry name" value="Glycerol_kin"/>
    <property type="match status" value="1"/>
</dbReference>
<dbReference type="InterPro" id="IPR043129">
    <property type="entry name" value="ATPase_NBD"/>
</dbReference>
<dbReference type="InterPro" id="IPR000577">
    <property type="entry name" value="Carb_kinase_FGGY"/>
</dbReference>
<dbReference type="InterPro" id="IPR018483">
    <property type="entry name" value="Carb_kinase_FGGY_CS"/>
</dbReference>
<dbReference type="InterPro" id="IPR018485">
    <property type="entry name" value="FGGY_C"/>
</dbReference>
<dbReference type="InterPro" id="IPR018484">
    <property type="entry name" value="FGGY_N"/>
</dbReference>
<dbReference type="InterPro" id="IPR005999">
    <property type="entry name" value="Glycerol_kin"/>
</dbReference>
<dbReference type="NCBIfam" id="TIGR01311">
    <property type="entry name" value="glycerol_kin"/>
    <property type="match status" value="1"/>
</dbReference>
<dbReference type="NCBIfam" id="NF000756">
    <property type="entry name" value="PRK00047.1"/>
    <property type="match status" value="1"/>
</dbReference>
<dbReference type="PANTHER" id="PTHR10196:SF69">
    <property type="entry name" value="GLYCEROL KINASE"/>
    <property type="match status" value="1"/>
</dbReference>
<dbReference type="PANTHER" id="PTHR10196">
    <property type="entry name" value="SUGAR KINASE"/>
    <property type="match status" value="1"/>
</dbReference>
<dbReference type="Pfam" id="PF02782">
    <property type="entry name" value="FGGY_C"/>
    <property type="match status" value="1"/>
</dbReference>
<dbReference type="Pfam" id="PF00370">
    <property type="entry name" value="FGGY_N"/>
    <property type="match status" value="1"/>
</dbReference>
<dbReference type="PIRSF" id="PIRSF000538">
    <property type="entry name" value="GlpK"/>
    <property type="match status" value="1"/>
</dbReference>
<dbReference type="SUPFAM" id="SSF53067">
    <property type="entry name" value="Actin-like ATPase domain"/>
    <property type="match status" value="2"/>
</dbReference>
<dbReference type="PROSITE" id="PS00445">
    <property type="entry name" value="FGGY_KINASES_2"/>
    <property type="match status" value="1"/>
</dbReference>